<name>KU80_SCHPO</name>
<feature type="chain" id="PRO_0000255456" description="ATP-dependent DNA helicase II subunit 2">
    <location>
        <begin position="1"/>
        <end position="695"/>
    </location>
</feature>
<feature type="domain" description="Ku">
    <location>
        <begin position="229"/>
        <end position="461"/>
    </location>
</feature>
<protein>
    <recommendedName>
        <fullName>ATP-dependent DNA helicase II subunit 2</fullName>
        <ecNumber>3.6.4.12</ecNumber>
    </recommendedName>
    <alternativeName>
        <fullName>ATP-dependent DNA helicase II subunit Ku80</fullName>
    </alternativeName>
    <alternativeName>
        <fullName>Pombe Ku80</fullName>
    </alternativeName>
</protein>
<reference key="1">
    <citation type="journal article" date="2002" name="Nature">
        <title>The genome sequence of Schizosaccharomyces pombe.</title>
        <authorList>
            <person name="Wood V."/>
            <person name="Gwilliam R."/>
            <person name="Rajandream M.A."/>
            <person name="Lyne M.H."/>
            <person name="Lyne R."/>
            <person name="Stewart A."/>
            <person name="Sgouros J.G."/>
            <person name="Peat N."/>
            <person name="Hayles J."/>
            <person name="Baker S.G."/>
            <person name="Basham D."/>
            <person name="Bowman S."/>
            <person name="Brooks K."/>
            <person name="Brown D."/>
            <person name="Brown S."/>
            <person name="Chillingworth T."/>
            <person name="Churcher C.M."/>
            <person name="Collins M."/>
            <person name="Connor R."/>
            <person name="Cronin A."/>
            <person name="Davis P."/>
            <person name="Feltwell T."/>
            <person name="Fraser A."/>
            <person name="Gentles S."/>
            <person name="Goble A."/>
            <person name="Hamlin N."/>
            <person name="Harris D.E."/>
            <person name="Hidalgo J."/>
            <person name="Hodgson G."/>
            <person name="Holroyd S."/>
            <person name="Hornsby T."/>
            <person name="Howarth S."/>
            <person name="Huckle E.J."/>
            <person name="Hunt S."/>
            <person name="Jagels K."/>
            <person name="James K.D."/>
            <person name="Jones L."/>
            <person name="Jones M."/>
            <person name="Leather S."/>
            <person name="McDonald S."/>
            <person name="McLean J."/>
            <person name="Mooney P."/>
            <person name="Moule S."/>
            <person name="Mungall K.L."/>
            <person name="Murphy L.D."/>
            <person name="Niblett D."/>
            <person name="Odell C."/>
            <person name="Oliver K."/>
            <person name="O'Neil S."/>
            <person name="Pearson D."/>
            <person name="Quail M.A."/>
            <person name="Rabbinowitsch E."/>
            <person name="Rutherford K.M."/>
            <person name="Rutter S."/>
            <person name="Saunders D."/>
            <person name="Seeger K."/>
            <person name="Sharp S."/>
            <person name="Skelton J."/>
            <person name="Simmonds M.N."/>
            <person name="Squares R."/>
            <person name="Squares S."/>
            <person name="Stevens K."/>
            <person name="Taylor K."/>
            <person name="Taylor R.G."/>
            <person name="Tivey A."/>
            <person name="Walsh S.V."/>
            <person name="Warren T."/>
            <person name="Whitehead S."/>
            <person name="Woodward J.R."/>
            <person name="Volckaert G."/>
            <person name="Aert R."/>
            <person name="Robben J."/>
            <person name="Grymonprez B."/>
            <person name="Weltjens I."/>
            <person name="Vanstreels E."/>
            <person name="Rieger M."/>
            <person name="Schaefer M."/>
            <person name="Mueller-Auer S."/>
            <person name="Gabel C."/>
            <person name="Fuchs M."/>
            <person name="Duesterhoeft A."/>
            <person name="Fritzc C."/>
            <person name="Holzer E."/>
            <person name="Moestl D."/>
            <person name="Hilbert H."/>
            <person name="Borzym K."/>
            <person name="Langer I."/>
            <person name="Beck A."/>
            <person name="Lehrach H."/>
            <person name="Reinhardt R."/>
            <person name="Pohl T.M."/>
            <person name="Eger P."/>
            <person name="Zimmermann W."/>
            <person name="Wedler H."/>
            <person name="Wambutt R."/>
            <person name="Purnelle B."/>
            <person name="Goffeau A."/>
            <person name="Cadieu E."/>
            <person name="Dreano S."/>
            <person name="Gloux S."/>
            <person name="Lelaure V."/>
            <person name="Mottier S."/>
            <person name="Galibert F."/>
            <person name="Aves S.J."/>
            <person name="Xiang Z."/>
            <person name="Hunt C."/>
            <person name="Moore K."/>
            <person name="Hurst S.M."/>
            <person name="Lucas M."/>
            <person name="Rochet M."/>
            <person name="Gaillardin C."/>
            <person name="Tallada V.A."/>
            <person name="Garzon A."/>
            <person name="Thode G."/>
            <person name="Daga R.R."/>
            <person name="Cruzado L."/>
            <person name="Jimenez J."/>
            <person name="Sanchez M."/>
            <person name="del Rey F."/>
            <person name="Benito J."/>
            <person name="Dominguez A."/>
            <person name="Revuelta J.L."/>
            <person name="Moreno S."/>
            <person name="Armstrong J."/>
            <person name="Forsburg S.L."/>
            <person name="Cerutti L."/>
            <person name="Lowe T."/>
            <person name="McCombie W.R."/>
            <person name="Paulsen I."/>
            <person name="Potashkin J."/>
            <person name="Shpakovski G.V."/>
            <person name="Ussery D."/>
            <person name="Barrell B.G."/>
            <person name="Nurse P."/>
        </authorList>
    </citation>
    <scope>NUCLEOTIDE SEQUENCE [LARGE SCALE GENOMIC DNA]</scope>
    <source>
        <strain>972 / ATCC 24843</strain>
    </source>
</reference>
<reference key="2">
    <citation type="journal article" date="2003" name="J. Biol. Chem.">
        <title>Telomeric DNA ends are essential for the localization of Ku at telomeres in fission yeast.</title>
        <authorList>
            <person name="Miyoshi T."/>
            <person name="Sadaie M."/>
            <person name="Kanoh J."/>
            <person name="Ishikawa F."/>
        </authorList>
    </citation>
    <scope>FUNCTION IN TELOMERE MAINTENANCE</scope>
    <scope>INTERACTION WITH PKU70</scope>
    <scope>SUBCELLULAR LOCATION</scope>
</reference>
<reference key="3">
    <citation type="journal article" date="2006" name="Nat. Biotechnol.">
        <title>ORFeome cloning and global analysis of protein localization in the fission yeast Schizosaccharomyces pombe.</title>
        <authorList>
            <person name="Matsuyama A."/>
            <person name="Arai R."/>
            <person name="Yashiroda Y."/>
            <person name="Shirai A."/>
            <person name="Kamata A."/>
            <person name="Sekido S."/>
            <person name="Kobayashi Y."/>
            <person name="Hashimoto A."/>
            <person name="Hamamoto M."/>
            <person name="Hiraoka Y."/>
            <person name="Horinouchi S."/>
            <person name="Yoshida M."/>
        </authorList>
    </citation>
    <scope>SUBCELLULAR LOCATION [LARGE SCALE ANALYSIS]</scope>
</reference>
<reference key="4">
    <citation type="journal article" date="2014" name="G3 (Bethesda)">
        <title>Genome-wide screens for sensitivity to ionizing radiation identify the fission yeast nonhomologous end joining factor Xrc4.</title>
        <authorList>
            <person name="Li J."/>
            <person name="Yu Y."/>
            <person name="Suo F."/>
            <person name="Sun L.L."/>
            <person name="Zhao D."/>
            <person name="Du L.L."/>
        </authorList>
    </citation>
    <scope>FUNCTION</scope>
    <scope>DISRUPTION PHENOTYPE</scope>
</reference>
<sequence length="695" mass="79871">MSDKECTVFVLDLGKDMGTCHHGRSHSDLEWTLSYFHDELSHKFLANRKTDVVGIVGYKCDDTKNDLAEQEAYWNISVLYPIQTALFSKLQSVSQTLKPSNTMQGDLISAIVVSFDLMARHCKKNKWKKKMIVLTAARGIIDFSDYIGIAEQLLQHDVFLGVYGVDFDQEDINYSEPLKESQKKENEVRIQEFVESCHGQYCTFQQIYNNIGKPWVRKVRPVAIFRGTFSIGNRDSKDTSISIQVERYPRTRLTKPPTSSAFYENDMSKNYECLNIENSNVENKSMESDAVSTVRSYMVRDPKTNDSFEVKREDLESGYSYGRTIVPISRSDEDVLALDTIPGYEILGFIPKSSLPIYYTISDTNIIVPKDDFESKLNFSAFVQSLEREHRYALARFVSKDKGVPVLLVLMPYVEFKRHYLVDIQLPFAEDVRPYSFSEFEKLSNEEDMRQIDFAVSNYIDNMDLDSSDCGFNPPFEPENTFSMIPHRLQQAISYYANSPEGDLPQPNIYLTRYTNPPKSLLDNCILDLKLIKEKLTVNVPVKPKYSSQETAFDTGAPISEEQIEELLNSGLDEQEGEKLLVLHVSEKDPVGTFTEVLKNPFGLEDALTEMEKVIKNLIDKSKYDLALQSLQSLRLHSILEDEVERFNEYLTRLKKDVMQNNKPKENELINKIRSSGLDIILHDELTRHDNFNNI</sequence>
<dbReference type="EC" id="3.6.4.12"/>
<dbReference type="EMBL" id="CU329671">
    <property type="protein sequence ID" value="CAC05245.1"/>
    <property type="molecule type" value="Genomic_DNA"/>
</dbReference>
<dbReference type="RefSeq" id="NP_596791.1">
    <property type="nucleotide sequence ID" value="NM_001023811.2"/>
</dbReference>
<dbReference type="SMR" id="Q9HGM8"/>
<dbReference type="BioGRID" id="277560">
    <property type="interactions" value="42"/>
</dbReference>
<dbReference type="FunCoup" id="Q9HGM8">
    <property type="interactions" value="499"/>
</dbReference>
<dbReference type="STRING" id="284812.Q9HGM8"/>
<dbReference type="PaxDb" id="4896-SPBC543.03c.1"/>
<dbReference type="EnsemblFungi" id="SPBC543.03c.1">
    <property type="protein sequence ID" value="SPBC543.03c.1:pep"/>
    <property type="gene ID" value="SPBC543.03c"/>
</dbReference>
<dbReference type="GeneID" id="2541045"/>
<dbReference type="KEGG" id="spo:2541045"/>
<dbReference type="PomBase" id="SPBC543.03c">
    <property type="gene designation" value="pku80"/>
</dbReference>
<dbReference type="VEuPathDB" id="FungiDB:SPBC543.03c"/>
<dbReference type="eggNOG" id="KOG2326">
    <property type="taxonomic scope" value="Eukaryota"/>
</dbReference>
<dbReference type="HOGENOM" id="CLU_010975_1_1_1"/>
<dbReference type="InParanoid" id="Q9HGM8"/>
<dbReference type="OMA" id="WAMQYVW"/>
<dbReference type="PhylomeDB" id="Q9HGM8"/>
<dbReference type="Reactome" id="R-SPO-6798695">
    <property type="pathway name" value="Neutrophil degranulation"/>
</dbReference>
<dbReference type="PRO" id="PR:Q9HGM8"/>
<dbReference type="Proteomes" id="UP000002485">
    <property type="component" value="Chromosome II"/>
</dbReference>
<dbReference type="GO" id="GO:0140445">
    <property type="term" value="C:chromosome, telomeric repeat region"/>
    <property type="evidence" value="ECO:0000314"/>
    <property type="project" value="PomBase"/>
</dbReference>
<dbReference type="GO" id="GO:0005829">
    <property type="term" value="C:cytosol"/>
    <property type="evidence" value="ECO:0007005"/>
    <property type="project" value="PomBase"/>
</dbReference>
<dbReference type="GO" id="GO:0043564">
    <property type="term" value="C:Ku70:Ku80 complex"/>
    <property type="evidence" value="ECO:0000318"/>
    <property type="project" value="GO_Central"/>
</dbReference>
<dbReference type="GO" id="GO:0005634">
    <property type="term" value="C:nucleus"/>
    <property type="evidence" value="ECO:0007005"/>
    <property type="project" value="PomBase"/>
</dbReference>
<dbReference type="GO" id="GO:0043138">
    <property type="term" value="F:3'-5' DNA helicase activity"/>
    <property type="evidence" value="ECO:0000250"/>
    <property type="project" value="PomBase"/>
</dbReference>
<dbReference type="GO" id="GO:0005524">
    <property type="term" value="F:ATP binding"/>
    <property type="evidence" value="ECO:0007669"/>
    <property type="project" value="UniProtKB-KW"/>
</dbReference>
<dbReference type="GO" id="GO:0016887">
    <property type="term" value="F:ATP hydrolysis activity"/>
    <property type="evidence" value="ECO:0007669"/>
    <property type="project" value="RHEA"/>
</dbReference>
<dbReference type="GO" id="GO:0003684">
    <property type="term" value="F:damaged DNA binding"/>
    <property type="evidence" value="ECO:0007669"/>
    <property type="project" value="InterPro"/>
</dbReference>
<dbReference type="GO" id="GO:0042162">
    <property type="term" value="F:telomeric DNA binding"/>
    <property type="evidence" value="ECO:0000314"/>
    <property type="project" value="PomBase"/>
</dbReference>
<dbReference type="GO" id="GO:0006310">
    <property type="term" value="P:DNA recombination"/>
    <property type="evidence" value="ECO:0007669"/>
    <property type="project" value="UniProtKB-KW"/>
</dbReference>
<dbReference type="GO" id="GO:0006303">
    <property type="term" value="P:double-strand break repair via nonhomologous end joining"/>
    <property type="evidence" value="ECO:0000315"/>
    <property type="project" value="PomBase"/>
</dbReference>
<dbReference type="GO" id="GO:0000723">
    <property type="term" value="P:telomere maintenance"/>
    <property type="evidence" value="ECO:0000315"/>
    <property type="project" value="PomBase"/>
</dbReference>
<dbReference type="CDD" id="cd00873">
    <property type="entry name" value="KU80"/>
    <property type="match status" value="1"/>
</dbReference>
<dbReference type="CDD" id="cd01458">
    <property type="entry name" value="vWA_ku"/>
    <property type="match status" value="1"/>
</dbReference>
<dbReference type="FunFam" id="3.40.50.410:FF:000073">
    <property type="entry name" value="ATP-dependent DNA helicase II subunit 2"/>
    <property type="match status" value="1"/>
</dbReference>
<dbReference type="Gene3D" id="1.10.1600.10">
    <property type="match status" value="1"/>
</dbReference>
<dbReference type="Gene3D" id="2.40.290.10">
    <property type="match status" value="1"/>
</dbReference>
<dbReference type="Gene3D" id="1.25.40.240">
    <property type="entry name" value="Ku, C-terminal domain"/>
    <property type="match status" value="1"/>
</dbReference>
<dbReference type="Gene3D" id="3.40.50.410">
    <property type="entry name" value="von Willebrand factor, type A domain"/>
    <property type="match status" value="1"/>
</dbReference>
<dbReference type="InterPro" id="IPR006164">
    <property type="entry name" value="Ku70/Ku80_beta-barrel_dom"/>
</dbReference>
<dbReference type="InterPro" id="IPR024193">
    <property type="entry name" value="Ku80"/>
</dbReference>
<dbReference type="InterPro" id="IPR036494">
    <property type="entry name" value="Ku_C_sf"/>
</dbReference>
<dbReference type="InterPro" id="IPR014893">
    <property type="entry name" value="Ku_PK_bind"/>
</dbReference>
<dbReference type="InterPro" id="IPR016194">
    <property type="entry name" value="SPOC-like_C_dom_sf"/>
</dbReference>
<dbReference type="InterPro" id="IPR036465">
    <property type="entry name" value="vWFA_dom_sf"/>
</dbReference>
<dbReference type="PANTHER" id="PTHR12604">
    <property type="entry name" value="KU AUTOANTIGEN DNA HELICASE"/>
    <property type="match status" value="1"/>
</dbReference>
<dbReference type="PANTHER" id="PTHR12604:SF4">
    <property type="entry name" value="X-RAY REPAIR CROSS-COMPLEMENTING PROTEIN 5"/>
    <property type="match status" value="1"/>
</dbReference>
<dbReference type="Pfam" id="PF02735">
    <property type="entry name" value="Ku"/>
    <property type="match status" value="1"/>
</dbReference>
<dbReference type="Pfam" id="PF08785">
    <property type="entry name" value="Ku_PK_bind"/>
    <property type="match status" value="1"/>
</dbReference>
<dbReference type="PIRSF" id="PIRSF016570">
    <property type="entry name" value="Ku80"/>
    <property type="match status" value="1"/>
</dbReference>
<dbReference type="SMART" id="SM00559">
    <property type="entry name" value="Ku78"/>
    <property type="match status" value="1"/>
</dbReference>
<dbReference type="SUPFAM" id="SSF101420">
    <property type="entry name" value="C-terminal domain of Ku80"/>
    <property type="match status" value="1"/>
</dbReference>
<dbReference type="SUPFAM" id="SSF100939">
    <property type="entry name" value="SPOC domain-like"/>
    <property type="match status" value="1"/>
</dbReference>
<dbReference type="SUPFAM" id="SSF53300">
    <property type="entry name" value="vWA-like"/>
    <property type="match status" value="1"/>
</dbReference>
<gene>
    <name type="primary">pku80</name>
    <name type="synonym">ku80</name>
    <name type="ORF">SPBC543.03c</name>
</gene>
<accession>Q9HGM8</accession>
<comment type="function">
    <text evidence="1 2 3 4">Single-stranded DNA-dependent ATP-dependent helicase (By similarity). Involved in non-homologous end joining (NHEJ) DNA double strand break repair (PubMed:12424244, PubMed:24847916). DNA-binding is sequence-independent but has a high affinity to nicks in double-stranded DNA and to the ends of duplex DNA (By similarity). Binds to naturally occurring chromosomal ends, and therefore provides chromosomal end protection (By similarity). Required also for telomere recombination to repair telomeric ends in the absence of telomerase (By similarity). ku70, of the ku70/ku80 heterodimer, binds to the stem loop of tlc1, the RNA component of telomerase (By similarity). Involved in telomere maintenance (PubMed:12424244). Interacts with telomeric repeats and subtelomeric sequences thereby controlling telomere length and protecting against subtelomeric rearrangement (PubMed:12424244). Required for mating-type switching (By similarity).</text>
</comment>
<comment type="catalytic activity">
    <reaction>
        <text>ATP + H2O = ADP + phosphate + H(+)</text>
        <dbReference type="Rhea" id="RHEA:13065"/>
        <dbReference type="ChEBI" id="CHEBI:15377"/>
        <dbReference type="ChEBI" id="CHEBI:15378"/>
        <dbReference type="ChEBI" id="CHEBI:30616"/>
        <dbReference type="ChEBI" id="CHEBI:43474"/>
        <dbReference type="ChEBI" id="CHEBI:456216"/>
        <dbReference type="EC" id="3.6.4.12"/>
    </reaction>
</comment>
<comment type="subunit">
    <text evidence="3">Heterodimer of pku70 and pku80.</text>
</comment>
<comment type="subcellular location">
    <subcellularLocation>
        <location evidence="3">Nucleus</location>
    </subcellularLocation>
    <subcellularLocation>
        <location evidence="3">Chromosome</location>
        <location evidence="3">Telomere</location>
    </subcellularLocation>
</comment>
<comment type="disruption phenotype">
    <text evidence="4">Spores sensitive to ionizing radiation.</text>
</comment>
<comment type="similarity">
    <text evidence="5">Belongs to the ku80 family.</text>
</comment>
<proteinExistence type="evidence at protein level"/>
<evidence type="ECO:0000250" key="1"/>
<evidence type="ECO:0000250" key="2">
    <source>
        <dbReference type="UniProtKB" id="Q04437"/>
    </source>
</evidence>
<evidence type="ECO:0000269" key="3">
    <source>
    </source>
</evidence>
<evidence type="ECO:0000269" key="4">
    <source>
    </source>
</evidence>
<evidence type="ECO:0000305" key="5"/>
<keyword id="KW-0067">ATP-binding</keyword>
<keyword id="KW-0158">Chromosome</keyword>
<keyword id="KW-0227">DNA damage</keyword>
<keyword id="KW-0233">DNA recombination</keyword>
<keyword id="KW-0234">DNA repair</keyword>
<keyword id="KW-0238">DNA-binding</keyword>
<keyword id="KW-0347">Helicase</keyword>
<keyword id="KW-0378">Hydrolase</keyword>
<keyword id="KW-0547">Nucleotide-binding</keyword>
<keyword id="KW-0539">Nucleus</keyword>
<keyword id="KW-1185">Reference proteome</keyword>
<keyword id="KW-0779">Telomere</keyword>
<organism>
    <name type="scientific">Schizosaccharomyces pombe (strain 972 / ATCC 24843)</name>
    <name type="common">Fission yeast</name>
    <dbReference type="NCBI Taxonomy" id="284812"/>
    <lineage>
        <taxon>Eukaryota</taxon>
        <taxon>Fungi</taxon>
        <taxon>Dikarya</taxon>
        <taxon>Ascomycota</taxon>
        <taxon>Taphrinomycotina</taxon>
        <taxon>Schizosaccharomycetes</taxon>
        <taxon>Schizosaccharomycetales</taxon>
        <taxon>Schizosaccharomycetaceae</taxon>
        <taxon>Schizosaccharomyces</taxon>
    </lineage>
</organism>